<evidence type="ECO:0000255" key="1">
    <source>
        <dbReference type="HAMAP-Rule" id="MF_01014"/>
    </source>
</evidence>
<comment type="catalytic activity">
    <reaction evidence="1">
        <text>1-(5-phospho-beta-D-ribosyl)-5-[(5-phospho-beta-D-ribosylamino)methylideneamino]imidazole-4-carboxamide = 5-[(5-phospho-1-deoxy-D-ribulos-1-ylimino)methylamino]-1-(5-phospho-beta-D-ribosyl)imidazole-4-carboxamide</text>
        <dbReference type="Rhea" id="RHEA:15469"/>
        <dbReference type="ChEBI" id="CHEBI:58435"/>
        <dbReference type="ChEBI" id="CHEBI:58525"/>
        <dbReference type="EC" id="5.3.1.16"/>
    </reaction>
</comment>
<comment type="pathway">
    <text evidence="1">Amino-acid biosynthesis; L-histidine biosynthesis; L-histidine from 5-phospho-alpha-D-ribose 1-diphosphate: step 4/9.</text>
</comment>
<comment type="subcellular location">
    <subcellularLocation>
        <location evidence="1">Cytoplasm</location>
    </subcellularLocation>
</comment>
<comment type="similarity">
    <text evidence="1">Belongs to the HisA/HisF family.</text>
</comment>
<accession>A7ZES8</accession>
<proteinExistence type="inferred from homology"/>
<gene>
    <name evidence="1" type="primary">hisA</name>
    <name type="ordered locus">Ccon26_14400</name>
    <name type="ORF">CCC13826_0444</name>
</gene>
<sequence length="236" mass="25443">MEIFPAIDLKEGQAVRLSKGLMQSAKIYSSEPSELAKRFEDYGAKWLHVVDLDGAFAGEAINFKTIEKIVKATNLKVQVGGGIRDEERIKRYLDLGVSRVILGSVALRDPEFTAKMAGIYRVVVGIDAKDGYVAVQGWGEVSNIKAVDLAKKFADVGVEAVICTDINKDGMLGGVNVDFSLQIARSSKLETIASGGVSDINDILALKATKEIAGVIVGKAYYEGRLDLKDAFKQVG</sequence>
<reference key="1">
    <citation type="submission" date="2007-10" db="EMBL/GenBank/DDBJ databases">
        <title>Genome sequence of Campylobacter concisus 13826 isolated from human feces.</title>
        <authorList>
            <person name="Fouts D.E."/>
            <person name="Mongodin E.F."/>
            <person name="Puiu D."/>
            <person name="Sebastian Y."/>
            <person name="Miller W.G."/>
            <person name="Mandrell R.E."/>
            <person name="On S."/>
            <person name="Nelson K.E."/>
        </authorList>
    </citation>
    <scope>NUCLEOTIDE SEQUENCE [LARGE SCALE GENOMIC DNA]</scope>
    <source>
        <strain>13826</strain>
    </source>
</reference>
<keyword id="KW-0028">Amino-acid biosynthesis</keyword>
<keyword id="KW-0963">Cytoplasm</keyword>
<keyword id="KW-0368">Histidine biosynthesis</keyword>
<keyword id="KW-0413">Isomerase</keyword>
<protein>
    <recommendedName>
        <fullName evidence="1">1-(5-phosphoribosyl)-5-[(5-phosphoribosylamino)methylideneamino] imidazole-4-carboxamide isomerase</fullName>
        <ecNumber evidence="1">5.3.1.16</ecNumber>
    </recommendedName>
    <alternativeName>
        <fullName evidence="1">Phosphoribosylformimino-5-aminoimidazole carboxamide ribotide isomerase</fullName>
    </alternativeName>
</protein>
<dbReference type="EC" id="5.3.1.16" evidence="1"/>
<dbReference type="EMBL" id="CP000792">
    <property type="protein sequence ID" value="EAT99237.1"/>
    <property type="molecule type" value="Genomic_DNA"/>
</dbReference>
<dbReference type="RefSeq" id="WP_012140178.1">
    <property type="nucleotide sequence ID" value="NC_009802.2"/>
</dbReference>
<dbReference type="SMR" id="A7ZES8"/>
<dbReference type="STRING" id="360104.CCC13826_0444"/>
<dbReference type="KEGG" id="cco:CCC13826_0444"/>
<dbReference type="eggNOG" id="COG0106">
    <property type="taxonomic scope" value="Bacteria"/>
</dbReference>
<dbReference type="HOGENOM" id="CLU_048577_1_2_7"/>
<dbReference type="OrthoDB" id="9807749at2"/>
<dbReference type="UniPathway" id="UPA00031">
    <property type="reaction ID" value="UER00009"/>
</dbReference>
<dbReference type="Proteomes" id="UP000001121">
    <property type="component" value="Chromosome"/>
</dbReference>
<dbReference type="GO" id="GO:0005737">
    <property type="term" value="C:cytoplasm"/>
    <property type="evidence" value="ECO:0007669"/>
    <property type="project" value="UniProtKB-SubCell"/>
</dbReference>
<dbReference type="GO" id="GO:0003949">
    <property type="term" value="F:1-(5-phosphoribosyl)-5-[(5-phosphoribosylamino)methylideneamino]imidazole-4-carboxamide isomerase activity"/>
    <property type="evidence" value="ECO:0007669"/>
    <property type="project" value="UniProtKB-UniRule"/>
</dbReference>
<dbReference type="GO" id="GO:0000105">
    <property type="term" value="P:L-histidine biosynthetic process"/>
    <property type="evidence" value="ECO:0007669"/>
    <property type="project" value="UniProtKB-UniRule"/>
</dbReference>
<dbReference type="GO" id="GO:0000162">
    <property type="term" value="P:L-tryptophan biosynthetic process"/>
    <property type="evidence" value="ECO:0007669"/>
    <property type="project" value="TreeGrafter"/>
</dbReference>
<dbReference type="CDD" id="cd04732">
    <property type="entry name" value="HisA"/>
    <property type="match status" value="1"/>
</dbReference>
<dbReference type="FunFam" id="3.20.20.70:FF:000009">
    <property type="entry name" value="1-(5-phosphoribosyl)-5-[(5-phosphoribosylamino)methylideneamino] imidazole-4-carboxamide isomerase"/>
    <property type="match status" value="1"/>
</dbReference>
<dbReference type="Gene3D" id="3.20.20.70">
    <property type="entry name" value="Aldolase class I"/>
    <property type="match status" value="1"/>
</dbReference>
<dbReference type="HAMAP" id="MF_01014">
    <property type="entry name" value="HisA"/>
    <property type="match status" value="1"/>
</dbReference>
<dbReference type="InterPro" id="IPR013785">
    <property type="entry name" value="Aldolase_TIM"/>
</dbReference>
<dbReference type="InterPro" id="IPR006062">
    <property type="entry name" value="His_biosynth"/>
</dbReference>
<dbReference type="InterPro" id="IPR006063">
    <property type="entry name" value="HisA_bact_arch"/>
</dbReference>
<dbReference type="InterPro" id="IPR044524">
    <property type="entry name" value="Isoase_HisA-like"/>
</dbReference>
<dbReference type="InterPro" id="IPR023016">
    <property type="entry name" value="Isoase_HisA-like_bact"/>
</dbReference>
<dbReference type="InterPro" id="IPR011060">
    <property type="entry name" value="RibuloseP-bd_barrel"/>
</dbReference>
<dbReference type="NCBIfam" id="TIGR00007">
    <property type="entry name" value="1-(5-phosphoribosyl)-5-[(5-phosphoribosylamino)methylideneamino]imidazole-4-carboxamide isomerase"/>
    <property type="match status" value="1"/>
</dbReference>
<dbReference type="PANTHER" id="PTHR43090">
    <property type="entry name" value="1-(5-PHOSPHORIBOSYL)-5-[(5-PHOSPHORIBOSYLAMINO)METHYLIDENEAMINO] IMIDAZOLE-4-CARBOXAMIDE ISOMERASE"/>
    <property type="match status" value="1"/>
</dbReference>
<dbReference type="PANTHER" id="PTHR43090:SF2">
    <property type="entry name" value="1-(5-PHOSPHORIBOSYL)-5-[(5-PHOSPHORIBOSYLAMINO)METHYLIDENEAMINO] IMIDAZOLE-4-CARBOXAMIDE ISOMERASE"/>
    <property type="match status" value="1"/>
</dbReference>
<dbReference type="Pfam" id="PF00977">
    <property type="entry name" value="His_biosynth"/>
    <property type="match status" value="1"/>
</dbReference>
<dbReference type="SUPFAM" id="SSF51366">
    <property type="entry name" value="Ribulose-phoshate binding barrel"/>
    <property type="match status" value="1"/>
</dbReference>
<organism>
    <name type="scientific">Campylobacter concisus (strain 13826)</name>
    <dbReference type="NCBI Taxonomy" id="360104"/>
    <lineage>
        <taxon>Bacteria</taxon>
        <taxon>Pseudomonadati</taxon>
        <taxon>Campylobacterota</taxon>
        <taxon>Epsilonproteobacteria</taxon>
        <taxon>Campylobacterales</taxon>
        <taxon>Campylobacteraceae</taxon>
        <taxon>Campylobacter</taxon>
    </lineage>
</organism>
<name>HIS4_CAMC1</name>
<feature type="chain" id="PRO_1000072932" description="1-(5-phosphoribosyl)-5-[(5-phosphoribosylamino)methylideneamino] imidazole-4-carboxamide isomerase">
    <location>
        <begin position="1"/>
        <end position="236"/>
    </location>
</feature>
<feature type="active site" description="Proton acceptor" evidence="1">
    <location>
        <position position="8"/>
    </location>
</feature>
<feature type="active site" description="Proton donor" evidence="1">
    <location>
        <position position="127"/>
    </location>
</feature>